<reference key="1">
    <citation type="journal article" date="1997" name="Nat. Genet.">
        <title>The mitochondrial genome of Arabidopsis thaliana contains 57 genes in 366,924 nucleotides.</title>
        <authorList>
            <person name="Unseld M."/>
            <person name="Marienfeld J.R."/>
            <person name="Brandt P."/>
            <person name="Brennicke A."/>
        </authorList>
    </citation>
    <scope>NUCLEOTIDE SEQUENCE [LARGE SCALE GENOMIC DNA]</scope>
    <source>
        <strain>cv. C24</strain>
    </source>
</reference>
<reference key="2">
    <citation type="journal article" date="2018" name="Plant Cell">
        <title>Correction of persistent errors in Arabidopsis reference mitochondrial genomes.</title>
        <authorList>
            <person name="Sloan D.B."/>
            <person name="Wu Z."/>
            <person name="Sharbrough J."/>
        </authorList>
    </citation>
    <scope>NUCLEOTIDE SEQUENCE [LARGE SCALE GENOMIC DNA]</scope>
    <source>
        <strain>cv. Columbia</strain>
    </source>
</reference>
<reference key="3">
    <citation type="journal article" date="1999" name="Nature">
        <title>Sequence and analysis of chromosome 2 of the plant Arabidopsis thaliana.</title>
        <authorList>
            <person name="Lin X."/>
            <person name="Kaul S."/>
            <person name="Rounsley S.D."/>
            <person name="Shea T.P."/>
            <person name="Benito M.-I."/>
            <person name="Town C.D."/>
            <person name="Fujii C.Y."/>
            <person name="Mason T.M."/>
            <person name="Bowman C.L."/>
            <person name="Barnstead M.E."/>
            <person name="Feldblyum T.V."/>
            <person name="Buell C.R."/>
            <person name="Ketchum K.A."/>
            <person name="Lee J.J."/>
            <person name="Ronning C.M."/>
            <person name="Koo H.L."/>
            <person name="Moffat K.S."/>
            <person name="Cronin L.A."/>
            <person name="Shen M."/>
            <person name="Pai G."/>
            <person name="Van Aken S."/>
            <person name="Umayam L."/>
            <person name="Tallon L.J."/>
            <person name="Gill J.E."/>
            <person name="Adams M.D."/>
            <person name="Carrera A.J."/>
            <person name="Creasy T.H."/>
            <person name="Goodman H.M."/>
            <person name="Somerville C.R."/>
            <person name="Copenhaver G.P."/>
            <person name="Preuss D."/>
            <person name="Nierman W.C."/>
            <person name="White O."/>
            <person name="Eisen J.A."/>
            <person name="Salzberg S.L."/>
            <person name="Fraser C.M."/>
            <person name="Venter J.C."/>
        </authorList>
    </citation>
    <scope>NUCLEOTIDE SEQUENCE [LARGE SCALE GENOMIC DNA] (AT2G07729)</scope>
    <source>
        <strain>cv. Columbia</strain>
    </source>
</reference>
<reference key="4">
    <citation type="journal article" date="2017" name="Plant J.">
        <title>Araport11: a complete reannotation of the Arabidopsis thaliana reference genome.</title>
        <authorList>
            <person name="Cheng C.Y."/>
            <person name="Krishnakumar V."/>
            <person name="Chan A.P."/>
            <person name="Thibaud-Nissen F."/>
            <person name="Schobel S."/>
            <person name="Town C.D."/>
        </authorList>
    </citation>
    <scope>GENOME REANNOTATION (AT2G07729)</scope>
    <source>
        <strain>cv. Columbia</strain>
    </source>
</reference>
<protein>
    <recommendedName>
        <fullName>Uncharacterized mitochondrial protein AtMg00240</fullName>
    </recommendedName>
    <alternativeName>
        <fullName>ORF111a</fullName>
    </alternativeName>
</protein>
<evidence type="ECO:0000305" key="1"/>
<evidence type="ECO:0000312" key="2">
    <source>
        <dbReference type="Araport" id="AT2G07729"/>
    </source>
</evidence>
<evidence type="ECO:0000312" key="3">
    <source>
        <dbReference type="Araport" id="ATMG00240"/>
    </source>
</evidence>
<keyword id="KW-0496">Mitochondrion</keyword>
<keyword id="KW-1185">Reference proteome</keyword>
<organism>
    <name type="scientific">Arabidopsis thaliana</name>
    <name type="common">Mouse-ear cress</name>
    <dbReference type="NCBI Taxonomy" id="3702"/>
    <lineage>
        <taxon>Eukaryota</taxon>
        <taxon>Viridiplantae</taxon>
        <taxon>Streptophyta</taxon>
        <taxon>Embryophyta</taxon>
        <taxon>Tracheophyta</taxon>
        <taxon>Spermatophyta</taxon>
        <taxon>Magnoliopsida</taxon>
        <taxon>eudicotyledons</taxon>
        <taxon>Gunneridae</taxon>
        <taxon>Pentapetalae</taxon>
        <taxon>rosids</taxon>
        <taxon>malvids</taxon>
        <taxon>Brassicales</taxon>
        <taxon>Brassicaceae</taxon>
        <taxon>Camelineae</taxon>
        <taxon>Arabidopsis</taxon>
    </lineage>
</organism>
<comment type="subcellular location">
    <subcellularLocation>
        <location evidence="1">Mitochondrion</location>
    </subcellularLocation>
</comment>
<comment type="miscellaneous">
    <text>A stretch of 270 kb of the mitochondrial genome is duplicated within the centromere of chromosome 2 resulting in the duplication of the gene. The expression of the duplicated gene (At2g07729) is not demonstrated.</text>
</comment>
<feature type="chain" id="PRO_0000196761" description="Uncharacterized mitochondrial protein AtMg00240">
    <location>
        <begin position="1"/>
        <end position="111"/>
    </location>
</feature>
<geneLocation type="mitochondrion"/>
<name>M240_ARATH</name>
<sequence>MYLTITRPDLTFAVNRLSQFSSASRTAQMQAVYKVLHYVKGTVGQGLFYSATSDLQLKAFADSDWASCPDTRRSVTGFCSLVPLWFLGALRKSILSPGLLQRQNIEALHLL</sequence>
<gene>
    <name evidence="3" type="ordered locus">AtMg00240</name>
</gene>
<gene>
    <name evidence="2" type="ordered locus">At2g07729</name>
</gene>
<accession>P93290</accession>
<dbReference type="EMBL" id="Y08501">
    <property type="protein sequence ID" value="CAA69767.1"/>
    <property type="molecule type" value="Genomic_DNA"/>
</dbReference>
<dbReference type="EMBL" id="BK010421">
    <property type="status" value="NOT_ANNOTATED_CDS"/>
    <property type="molecule type" value="Genomic_DNA"/>
</dbReference>
<dbReference type="EMBL" id="AC006225">
    <property type="status" value="NOT_ANNOTATED_CDS"/>
    <property type="molecule type" value="Genomic_DNA"/>
</dbReference>
<dbReference type="EMBL" id="CP002685">
    <property type="status" value="NOT_ANNOTATED_CDS"/>
    <property type="molecule type" value="Genomic_DNA"/>
</dbReference>
<dbReference type="RefSeq" id="NP_085493.1">
    <property type="nucleotide sequence ID" value="NC_001284.2"/>
</dbReference>
<dbReference type="STRING" id="3702.P93290"/>
<dbReference type="PaxDb" id="3702-ATMG00240.1"/>
<dbReference type="EnsemblPlants" id="ATMG00240.1">
    <property type="protein sequence ID" value="ATMG00240.1"/>
    <property type="gene ID" value="ATMG00240"/>
</dbReference>
<dbReference type="Gramene" id="ATMG00240.1">
    <property type="protein sequence ID" value="ATMG00240.1"/>
    <property type="gene ID" value="ATMG00240"/>
</dbReference>
<dbReference type="Araport" id="AT2G07729"/>
<dbReference type="Araport" id="ATMG00240"/>
<dbReference type="TAIR" id="AT2G07729"/>
<dbReference type="TAIR" id="ATMG00240">
    <property type="gene designation" value="ORF111A"/>
</dbReference>
<dbReference type="eggNOG" id="KOG0017">
    <property type="taxonomic scope" value="Eukaryota"/>
</dbReference>
<dbReference type="HOGENOM" id="CLU_2161892_0_0_1"/>
<dbReference type="InParanoid" id="P93290"/>
<dbReference type="OMA" id="TTHWIAC"/>
<dbReference type="PRO" id="PR:P93290"/>
<dbReference type="Proteomes" id="UP000006548">
    <property type="component" value="Chromosome 2"/>
</dbReference>
<dbReference type="Proteomes" id="UP000006548">
    <property type="component" value="Mitochondrion MT"/>
</dbReference>
<dbReference type="ExpressionAtlas" id="P93290">
    <property type="expression patterns" value="baseline"/>
</dbReference>
<dbReference type="GO" id="GO:0005739">
    <property type="term" value="C:mitochondrion"/>
    <property type="evidence" value="ECO:0007669"/>
    <property type="project" value="UniProtKB-SubCell"/>
</dbReference>
<dbReference type="PANTHER" id="PTHR11439:SF498">
    <property type="entry name" value="DNAK FAMILY PROTEIN"/>
    <property type="match status" value="1"/>
</dbReference>
<dbReference type="PANTHER" id="PTHR11439">
    <property type="entry name" value="GAG-POL-RELATED RETROTRANSPOSON"/>
    <property type="match status" value="1"/>
</dbReference>
<proteinExistence type="predicted"/>